<keyword id="KW-0002">3D-structure</keyword>
<keyword id="KW-0007">Acetylation</keyword>
<keyword id="KW-0020">Allergen</keyword>
<keyword id="KW-0106">Calcium</keyword>
<keyword id="KW-0903">Direct protein sequencing</keyword>
<keyword id="KW-0479">Metal-binding</keyword>
<keyword id="KW-0514">Muscle protein</keyword>
<keyword id="KW-0677">Repeat</keyword>
<comment type="function">
    <text evidence="1 3">In muscle, parvalbumin is thought to be involved in relaxation after contraction (By similarity). It binds two calcium ions (PubMed:39584689).</text>
</comment>
<comment type="biophysicochemical properties">
    <temperatureDependence>
        <text evidence="3">Thermostable between pH 4.0-9.5. Average melting temperature (Tm) across all pH values is 68 degrees Celsius.</text>
    </temperatureDependence>
</comment>
<comment type="subunit">
    <text evidence="3">Monomer.</text>
</comment>
<comment type="allergen">
    <text evidence="3">Causes an allergic reaction in human (PubMed:39584689). Recombinant protein binds to IgE of fish-allergic Polish patients due to cross-reactivity of the parvalbumins (PubMed:39584689). Does not cross-react with Cyp c 1.0101 allergen from common carp (PubMed:39584689). Retains some of its IgE-binding in the presence of calcium-chelating EDTA (PubMed:39584689).</text>
</comment>
<comment type="miscellaneous">
    <text evidence="4">This parvalbumin has an isoelectric point of 4.45.</text>
</comment>
<comment type="similarity">
    <text evidence="6">Belongs to the parvalbumin family.</text>
</comment>
<dbReference type="PIR" id="A03065">
    <property type="entry name" value="PVRYC"/>
</dbReference>
<dbReference type="PDB" id="9BAR">
    <property type="method" value="X-ray"/>
    <property type="resolution" value="1.75 A"/>
    <property type="chains" value="A=1-109"/>
</dbReference>
<dbReference type="PDBsum" id="9BAR"/>
<dbReference type="SMR" id="P02630"/>
<dbReference type="Allergome" id="12345">
    <property type="allergen name" value="Raj c 1"/>
</dbReference>
<dbReference type="iPTMnet" id="P02630"/>
<dbReference type="GO" id="GO:0005737">
    <property type="term" value="C:cytoplasm"/>
    <property type="evidence" value="ECO:0007669"/>
    <property type="project" value="TreeGrafter"/>
</dbReference>
<dbReference type="GO" id="GO:0005509">
    <property type="term" value="F:calcium ion binding"/>
    <property type="evidence" value="ECO:0007669"/>
    <property type="project" value="InterPro"/>
</dbReference>
<dbReference type="CDD" id="cd16253">
    <property type="entry name" value="EFh_parvalbumins"/>
    <property type="match status" value="1"/>
</dbReference>
<dbReference type="Gene3D" id="1.10.238.10">
    <property type="entry name" value="EF-hand"/>
    <property type="match status" value="1"/>
</dbReference>
<dbReference type="InterPro" id="IPR011992">
    <property type="entry name" value="EF-hand-dom_pair"/>
</dbReference>
<dbReference type="InterPro" id="IPR018247">
    <property type="entry name" value="EF_Hand_1_Ca_BS"/>
</dbReference>
<dbReference type="InterPro" id="IPR002048">
    <property type="entry name" value="EF_hand_dom"/>
</dbReference>
<dbReference type="InterPro" id="IPR008080">
    <property type="entry name" value="Parvalbumin"/>
</dbReference>
<dbReference type="PANTHER" id="PTHR11653:SF10">
    <property type="entry name" value="EF-HAND DOMAIN-CONTAINING PROTEIN"/>
    <property type="match status" value="1"/>
</dbReference>
<dbReference type="PANTHER" id="PTHR11653">
    <property type="entry name" value="PARVALBUMIN ALPHA"/>
    <property type="match status" value="1"/>
</dbReference>
<dbReference type="Pfam" id="PF13499">
    <property type="entry name" value="EF-hand_7"/>
    <property type="match status" value="1"/>
</dbReference>
<dbReference type="PRINTS" id="PR01697">
    <property type="entry name" value="PARVALBUMIN"/>
</dbReference>
<dbReference type="SMART" id="SM00054">
    <property type="entry name" value="EFh"/>
    <property type="match status" value="2"/>
</dbReference>
<dbReference type="SUPFAM" id="SSF47473">
    <property type="entry name" value="EF-hand"/>
    <property type="match status" value="1"/>
</dbReference>
<dbReference type="PROSITE" id="PS00018">
    <property type="entry name" value="EF_HAND_1"/>
    <property type="match status" value="2"/>
</dbReference>
<dbReference type="PROSITE" id="PS50222">
    <property type="entry name" value="EF_HAND_2"/>
    <property type="match status" value="2"/>
</dbReference>
<protein>
    <recommendedName>
        <fullName evidence="6">Parvalbumin alpha</fullName>
    </recommendedName>
    <alternativeName>
        <fullName evidence="5">Alpha-parvalbumin</fullName>
        <shortName evidence="5">Alpha-PV</shortName>
    </alternativeName>
    <allergenName evidence="6">Raj c 1</allergenName>
</protein>
<feature type="chain" id="PRO_0000073597" description="Parvalbumin alpha">
    <location>
        <begin position="1"/>
        <end position="109"/>
    </location>
</feature>
<feature type="domain" description="EF-hand 1" evidence="2">
    <location>
        <begin position="38"/>
        <end position="73"/>
    </location>
</feature>
<feature type="domain" description="EF-hand 2" evidence="2">
    <location>
        <begin position="77"/>
        <end position="109"/>
    </location>
</feature>
<feature type="binding site" evidence="2 3 7">
    <location>
        <position position="51"/>
    </location>
    <ligand>
        <name>Ca(2+)</name>
        <dbReference type="ChEBI" id="CHEBI:29108"/>
        <label>1</label>
    </ligand>
</feature>
<feature type="binding site" evidence="2 3 7">
    <location>
        <position position="53"/>
    </location>
    <ligand>
        <name>Ca(2+)</name>
        <dbReference type="ChEBI" id="CHEBI:29108"/>
        <label>1</label>
    </ligand>
</feature>
<feature type="binding site" evidence="2 3 7">
    <location>
        <position position="55"/>
    </location>
    <ligand>
        <name>Ca(2+)</name>
        <dbReference type="ChEBI" id="CHEBI:29108"/>
        <label>1</label>
    </ligand>
</feature>
<feature type="binding site" evidence="2 3 7">
    <location>
        <position position="57"/>
    </location>
    <ligand>
        <name>Ca(2+)</name>
        <dbReference type="ChEBI" id="CHEBI:29108"/>
        <label>1</label>
    </ligand>
</feature>
<feature type="binding site" evidence="3 7">
    <location>
        <position position="59"/>
    </location>
    <ligand>
        <name>Ca(2+)</name>
        <dbReference type="ChEBI" id="CHEBI:29108"/>
        <label>1</label>
    </ligand>
</feature>
<feature type="binding site" evidence="2 3 7">
    <location>
        <position position="62"/>
    </location>
    <ligand>
        <name>Ca(2+)</name>
        <dbReference type="ChEBI" id="CHEBI:29108"/>
        <label>1</label>
    </ligand>
</feature>
<feature type="binding site" evidence="2 3 7">
    <location>
        <position position="90"/>
    </location>
    <ligand>
        <name>Ca(2+)</name>
        <dbReference type="ChEBI" id="CHEBI:29108"/>
        <label>2</label>
    </ligand>
</feature>
<feature type="binding site" evidence="2 3 7">
    <location>
        <position position="92"/>
    </location>
    <ligand>
        <name>Ca(2+)</name>
        <dbReference type="ChEBI" id="CHEBI:29108"/>
        <label>2</label>
    </ligand>
</feature>
<feature type="binding site" evidence="2 3 7">
    <location>
        <position position="94"/>
    </location>
    <ligand>
        <name>Ca(2+)</name>
        <dbReference type="ChEBI" id="CHEBI:29108"/>
        <label>2</label>
    </ligand>
</feature>
<feature type="binding site" evidence="2 3 7">
    <location>
        <position position="96"/>
    </location>
    <ligand>
        <name>Ca(2+)</name>
        <dbReference type="ChEBI" id="CHEBI:29108"/>
        <label>2</label>
    </ligand>
</feature>
<feature type="binding site" evidence="2 3 7">
    <location>
        <position position="101"/>
    </location>
    <ligand>
        <name>Ca(2+)</name>
        <dbReference type="ChEBI" id="CHEBI:29108"/>
        <label>2</label>
    </ligand>
</feature>
<feature type="modified residue" description="N-acetylserine" evidence="4">
    <location>
        <position position="1"/>
    </location>
</feature>
<feature type="helix" evidence="8">
    <location>
        <begin position="3"/>
        <end position="7"/>
    </location>
</feature>
<feature type="helix" evidence="8">
    <location>
        <begin position="10"/>
        <end position="18"/>
    </location>
</feature>
<feature type="turn" evidence="8">
    <location>
        <begin position="19"/>
        <end position="22"/>
    </location>
</feature>
<feature type="helix" evidence="8">
    <location>
        <begin position="26"/>
        <end position="33"/>
    </location>
</feature>
<feature type="helix" evidence="8">
    <location>
        <begin position="35"/>
        <end position="37"/>
    </location>
</feature>
<feature type="helix" evidence="8">
    <location>
        <begin position="40"/>
        <end position="50"/>
    </location>
</feature>
<feature type="strand" evidence="8">
    <location>
        <begin position="55"/>
        <end position="58"/>
    </location>
</feature>
<feature type="helix" evidence="8">
    <location>
        <begin position="60"/>
        <end position="63"/>
    </location>
</feature>
<feature type="helix" evidence="8">
    <location>
        <begin position="64"/>
        <end position="69"/>
    </location>
</feature>
<feature type="helix" evidence="8">
    <location>
        <begin position="79"/>
        <end position="89"/>
    </location>
</feature>
<feature type="strand" evidence="8">
    <location>
        <begin position="92"/>
        <end position="97"/>
    </location>
</feature>
<feature type="helix" evidence="8">
    <location>
        <begin position="99"/>
        <end position="108"/>
    </location>
</feature>
<proteinExistence type="evidence at protein level"/>
<accession>P02630</accession>
<evidence type="ECO:0000250" key="1">
    <source>
        <dbReference type="UniProtKB" id="P86432"/>
    </source>
</evidence>
<evidence type="ECO:0000255" key="2">
    <source>
        <dbReference type="PROSITE-ProRule" id="PRU00448"/>
    </source>
</evidence>
<evidence type="ECO:0000269" key="3">
    <source>
    </source>
</evidence>
<evidence type="ECO:0000269" key="4">
    <source>
    </source>
</evidence>
<evidence type="ECO:0000303" key="5">
    <source>
    </source>
</evidence>
<evidence type="ECO:0000305" key="6"/>
<evidence type="ECO:0007744" key="7">
    <source>
        <dbReference type="PDB" id="9BAR"/>
    </source>
</evidence>
<evidence type="ECO:0007829" key="8">
    <source>
        <dbReference type="PDB" id="9BAR"/>
    </source>
</evidence>
<reference key="1">
    <citation type="journal article" date="1977" name="Eur. J. Biochem.">
        <title>The amino-acid sequence of the major parvalbumin from thornback-ray muscle.</title>
        <authorList>
            <person name="Thatcher D.R."/>
            <person name="Pechere J.-F."/>
        </authorList>
    </citation>
    <scope>PROTEIN SEQUENCE</scope>
    <scope>ACETYLATION AT SER-1</scope>
</reference>
<reference evidence="7" key="2">
    <citation type="journal article" date="2024" name="Protein Sci.">
        <title>Comparative studies of seafood and reptile alpha- and beta-parvalbumins.</title>
        <authorList>
            <person name="O'Malley A."/>
            <person name="Ray J.M."/>
            <person name="Kitlas P."/>
            <person name="Ruethers T."/>
            <person name="Kapingidza A.B."/>
            <person name="Cierpicki T."/>
            <person name="Lopata A."/>
            <person name="Kowal K."/>
            <person name="Chruszcz M."/>
        </authorList>
    </citation>
    <scope>X-RAY CRYSTALLOGRAPHY (1.75 ANGSTROMS) IN COMPLEX WITH CA(2+)</scope>
    <scope>BIOPHYSICOCHEMICAL PROPERTIES</scope>
    <scope>SUBUNIT</scope>
    <scope>ALLERGEN</scope>
</reference>
<name>PRVA_RAJCL</name>
<sequence length="109" mass="11779">SSKITSILNPADITKALEQCAAGFHHTAFFKASGLSKKSDAELAEIFNVLDGDQSGYIEVEELKNFLKCFSDGARVLNDKETSNFLAAGDSDGDHKIGVDEFKSMAKMT</sequence>
<organism>
    <name type="scientific">Raja clavata</name>
    <name type="common">Thornback ray</name>
    <dbReference type="NCBI Taxonomy" id="7781"/>
    <lineage>
        <taxon>Eukaryota</taxon>
        <taxon>Metazoa</taxon>
        <taxon>Chordata</taxon>
        <taxon>Craniata</taxon>
        <taxon>Vertebrata</taxon>
        <taxon>Chondrichthyes</taxon>
        <taxon>Elasmobranchii</taxon>
        <taxon>Batoidea</taxon>
        <taxon>Rajiformes</taxon>
        <taxon>Rajidae</taxon>
        <taxon>Raja</taxon>
    </lineage>
</organism>